<name>PRP19_ORYSJ</name>
<feature type="chain" id="PRO_0000397692" description="Pre-mRNA-processing factor 19">
    <location>
        <begin position="1"/>
        <end position="527"/>
    </location>
</feature>
<feature type="domain" description="U-box">
    <location>
        <begin position="1"/>
        <end position="70"/>
    </location>
</feature>
<feature type="repeat" description="WD 1">
    <location>
        <begin position="219"/>
        <end position="258"/>
    </location>
</feature>
<feature type="repeat" description="WD 2">
    <location>
        <begin position="261"/>
        <end position="300"/>
    </location>
</feature>
<feature type="repeat" description="WD 3">
    <location>
        <begin position="306"/>
        <end position="345"/>
    </location>
</feature>
<feature type="repeat" description="WD 4">
    <location>
        <begin position="350"/>
        <end position="389"/>
    </location>
</feature>
<feature type="repeat" description="WD 5">
    <location>
        <begin position="392"/>
        <end position="430"/>
    </location>
</feature>
<feature type="repeat" description="WD 6">
    <location>
        <begin position="435"/>
        <end position="474"/>
    </location>
</feature>
<feature type="repeat" description="WD 7">
    <location>
        <begin position="481"/>
        <end position="520"/>
    </location>
</feature>
<feature type="coiled-coil region" evidence="3">
    <location>
        <begin position="107"/>
        <end position="141"/>
    </location>
</feature>
<keyword id="KW-0175">Coiled coil</keyword>
<keyword id="KW-0227">DNA damage</keyword>
<keyword id="KW-0234">DNA repair</keyword>
<keyword id="KW-0391">Immunity</keyword>
<keyword id="KW-0399">Innate immunity</keyword>
<keyword id="KW-0507">mRNA processing</keyword>
<keyword id="KW-0508">mRNA splicing</keyword>
<keyword id="KW-0539">Nucleus</keyword>
<keyword id="KW-0611">Plant defense</keyword>
<keyword id="KW-1185">Reference proteome</keyword>
<keyword id="KW-0677">Repeat</keyword>
<keyword id="KW-0747">Spliceosome</keyword>
<keyword id="KW-0808">Transferase</keyword>
<keyword id="KW-0833">Ubl conjugation pathway</keyword>
<keyword id="KW-0853">WD repeat</keyword>
<sequence length="527" mass="57817">MICAISGEVPDEPVVSKKSGLLFERRLVERYIEDHGKCPVTKEELTMDDIVAVKTNKVVKPRQLQAASIPGLLGMFQNEWDAIMLSSFALEQQLHTARQELSHALYQHDAACRVIARLKKERDEARALLAQAERQIPASMAGAAPTAVVSNGKRAFEDEVGPDGKKIRPGINPVMIDELTECNTMLSAHRKKRQVPPTLASIDAIERYTQISSHPLHKTNKPGILSMDIHPSKDIIATGGIDTNAVLFDRPSGQILCTLTGHSKKITSLKFVPRDELFVTGSADKTVKIWQGSEEGNYNCIHTLKDHTAEVEAVTVHATQKYFVTASKDNTWCFYDIPSGSCLTQVGESSGQEGYTSASFHPDGLILGTGTTEAVVKIWDVKTQSNVAKFEGHVGPVTAMSFSENGYFLATAALDGVKLWDLRKLRNFRTISPYDSDTPTNSVEFDFSGSYLAVGGSDTRVYQVANVKLEWNLVKTLPDLSGTGKVTNVKFGTDAKYIAVGSMDRNLRIFGHPGEDDQMDDAKPSEE</sequence>
<reference key="1">
    <citation type="journal article" date="2003" name="Science">
        <title>In-depth view of structure, activity, and evolution of rice chromosome 10.</title>
        <authorList>
            <person name="Yu Y."/>
            <person name="Rambo T."/>
            <person name="Currie J."/>
            <person name="Saski C."/>
            <person name="Kim H.-R."/>
            <person name="Collura K."/>
            <person name="Thompson S."/>
            <person name="Simmons J."/>
            <person name="Yang T.-J."/>
            <person name="Nah G."/>
            <person name="Patel A.J."/>
            <person name="Thurmond S."/>
            <person name="Henry D."/>
            <person name="Oates R."/>
            <person name="Palmer M."/>
            <person name="Pries G."/>
            <person name="Gibson J."/>
            <person name="Anderson H."/>
            <person name="Paradkar M."/>
            <person name="Crane L."/>
            <person name="Dale J."/>
            <person name="Carver M.B."/>
            <person name="Wood T."/>
            <person name="Frisch D."/>
            <person name="Engler F."/>
            <person name="Soderlund C."/>
            <person name="Palmer L.E."/>
            <person name="Teytelman L."/>
            <person name="Nascimento L."/>
            <person name="De la Bastide M."/>
            <person name="Spiegel L."/>
            <person name="Ware D."/>
            <person name="O'Shaughnessy A."/>
            <person name="Dike S."/>
            <person name="Dedhia N."/>
            <person name="Preston R."/>
            <person name="Huang E."/>
            <person name="Ferraro K."/>
            <person name="Kuit K."/>
            <person name="Miller B."/>
            <person name="Zutavern T."/>
            <person name="Katzenberger F."/>
            <person name="Muller S."/>
            <person name="Balija V."/>
            <person name="Martienssen R.A."/>
            <person name="Stein L."/>
            <person name="Minx P."/>
            <person name="Johnson D."/>
            <person name="Cordum H."/>
            <person name="Mardis E."/>
            <person name="Cheng Z."/>
            <person name="Jiang J."/>
            <person name="Wilson R."/>
            <person name="McCombie W.R."/>
            <person name="Wing R.A."/>
            <person name="Yuan Q."/>
            <person name="Ouyang S."/>
            <person name="Liu J."/>
            <person name="Jones K.M."/>
            <person name="Gansberger K."/>
            <person name="Moffat K."/>
            <person name="Hill J."/>
            <person name="Tsitrin T."/>
            <person name="Overton L."/>
            <person name="Bera J."/>
            <person name="Kim M."/>
            <person name="Jin S."/>
            <person name="Tallon L."/>
            <person name="Ciecko A."/>
            <person name="Pai G."/>
            <person name="Van Aken S."/>
            <person name="Utterback T."/>
            <person name="Reidmuller S."/>
            <person name="Bormann J."/>
            <person name="Feldblyum T."/>
            <person name="Hsiao J."/>
            <person name="Zismann V."/>
            <person name="Blunt S."/>
            <person name="de Vazeille A.R."/>
            <person name="Shaffer T."/>
            <person name="Koo H."/>
            <person name="Suh B."/>
            <person name="Yang Q."/>
            <person name="Haas B."/>
            <person name="Peterson J."/>
            <person name="Pertea M."/>
            <person name="Volfovsky N."/>
            <person name="Wortman J."/>
            <person name="White O."/>
            <person name="Salzberg S.L."/>
            <person name="Fraser C.M."/>
            <person name="Buell C.R."/>
            <person name="Messing J."/>
            <person name="Song R."/>
            <person name="Fuks G."/>
            <person name="Llaca V."/>
            <person name="Kovchak S."/>
            <person name="Young S."/>
            <person name="Bowers J.E."/>
            <person name="Paterson A.H."/>
            <person name="Johns M.A."/>
            <person name="Mao L."/>
            <person name="Pan H."/>
            <person name="Dean R.A."/>
        </authorList>
    </citation>
    <scope>NUCLEOTIDE SEQUENCE [LARGE SCALE GENOMIC DNA]</scope>
    <source>
        <strain>cv. Nipponbare</strain>
    </source>
</reference>
<reference key="2">
    <citation type="journal article" date="2005" name="Nature">
        <title>The map-based sequence of the rice genome.</title>
        <authorList>
            <consortium name="International rice genome sequencing project (IRGSP)"/>
        </authorList>
    </citation>
    <scope>NUCLEOTIDE SEQUENCE [LARGE SCALE GENOMIC DNA]</scope>
    <source>
        <strain>cv. Nipponbare</strain>
    </source>
</reference>
<reference key="3">
    <citation type="journal article" date="2008" name="Nucleic Acids Res.">
        <title>The rice annotation project database (RAP-DB): 2008 update.</title>
        <authorList>
            <consortium name="The rice annotation project (RAP)"/>
        </authorList>
    </citation>
    <scope>GENOME REANNOTATION</scope>
    <source>
        <strain>cv. Nipponbare</strain>
    </source>
</reference>
<reference key="4">
    <citation type="journal article" date="2013" name="Rice">
        <title>Improvement of the Oryza sativa Nipponbare reference genome using next generation sequence and optical map data.</title>
        <authorList>
            <person name="Kawahara Y."/>
            <person name="de la Bastide M."/>
            <person name="Hamilton J.P."/>
            <person name="Kanamori H."/>
            <person name="McCombie W.R."/>
            <person name="Ouyang S."/>
            <person name="Schwartz D.C."/>
            <person name="Tanaka T."/>
            <person name="Wu J."/>
            <person name="Zhou S."/>
            <person name="Childs K.L."/>
            <person name="Davidson R.M."/>
            <person name="Lin H."/>
            <person name="Quesada-Ocampo L."/>
            <person name="Vaillancourt B."/>
            <person name="Sakai H."/>
            <person name="Lee S.S."/>
            <person name="Kim J."/>
            <person name="Numa H."/>
            <person name="Itoh T."/>
            <person name="Buell C.R."/>
            <person name="Matsumoto T."/>
        </authorList>
    </citation>
    <scope>GENOME REANNOTATION</scope>
    <source>
        <strain>cv. Nipponbare</strain>
    </source>
</reference>
<reference key="5">
    <citation type="journal article" date="2005" name="PLoS Biol.">
        <title>The genomes of Oryza sativa: a history of duplications.</title>
        <authorList>
            <person name="Yu J."/>
            <person name="Wang J."/>
            <person name="Lin W."/>
            <person name="Li S."/>
            <person name="Li H."/>
            <person name="Zhou J."/>
            <person name="Ni P."/>
            <person name="Dong W."/>
            <person name="Hu S."/>
            <person name="Zeng C."/>
            <person name="Zhang J."/>
            <person name="Zhang Y."/>
            <person name="Li R."/>
            <person name="Xu Z."/>
            <person name="Li S."/>
            <person name="Li X."/>
            <person name="Zheng H."/>
            <person name="Cong L."/>
            <person name="Lin L."/>
            <person name="Yin J."/>
            <person name="Geng J."/>
            <person name="Li G."/>
            <person name="Shi J."/>
            <person name="Liu J."/>
            <person name="Lv H."/>
            <person name="Li J."/>
            <person name="Wang J."/>
            <person name="Deng Y."/>
            <person name="Ran L."/>
            <person name="Shi X."/>
            <person name="Wang X."/>
            <person name="Wu Q."/>
            <person name="Li C."/>
            <person name="Ren X."/>
            <person name="Wang J."/>
            <person name="Wang X."/>
            <person name="Li D."/>
            <person name="Liu D."/>
            <person name="Zhang X."/>
            <person name="Ji Z."/>
            <person name="Zhao W."/>
            <person name="Sun Y."/>
            <person name="Zhang Z."/>
            <person name="Bao J."/>
            <person name="Han Y."/>
            <person name="Dong L."/>
            <person name="Ji J."/>
            <person name="Chen P."/>
            <person name="Wu S."/>
            <person name="Liu J."/>
            <person name="Xiao Y."/>
            <person name="Bu D."/>
            <person name="Tan J."/>
            <person name="Yang L."/>
            <person name="Ye C."/>
            <person name="Zhang J."/>
            <person name="Xu J."/>
            <person name="Zhou Y."/>
            <person name="Yu Y."/>
            <person name="Zhang B."/>
            <person name="Zhuang S."/>
            <person name="Wei H."/>
            <person name="Liu B."/>
            <person name="Lei M."/>
            <person name="Yu H."/>
            <person name="Li Y."/>
            <person name="Xu H."/>
            <person name="Wei S."/>
            <person name="He X."/>
            <person name="Fang L."/>
            <person name="Zhang Z."/>
            <person name="Zhang Y."/>
            <person name="Huang X."/>
            <person name="Su Z."/>
            <person name="Tong W."/>
            <person name="Li J."/>
            <person name="Tong Z."/>
            <person name="Li S."/>
            <person name="Ye J."/>
            <person name="Wang L."/>
            <person name="Fang L."/>
            <person name="Lei T."/>
            <person name="Chen C.-S."/>
            <person name="Chen H.-C."/>
            <person name="Xu Z."/>
            <person name="Li H."/>
            <person name="Huang H."/>
            <person name="Zhang F."/>
            <person name="Xu H."/>
            <person name="Li N."/>
            <person name="Zhao C."/>
            <person name="Li S."/>
            <person name="Dong L."/>
            <person name="Huang Y."/>
            <person name="Li L."/>
            <person name="Xi Y."/>
            <person name="Qi Q."/>
            <person name="Li W."/>
            <person name="Zhang B."/>
            <person name="Hu W."/>
            <person name="Zhang Y."/>
            <person name="Tian X."/>
            <person name="Jiao Y."/>
            <person name="Liang X."/>
            <person name="Jin J."/>
            <person name="Gao L."/>
            <person name="Zheng W."/>
            <person name="Hao B."/>
            <person name="Liu S.-M."/>
            <person name="Wang W."/>
            <person name="Yuan L."/>
            <person name="Cao M."/>
            <person name="McDermott J."/>
            <person name="Samudrala R."/>
            <person name="Wang J."/>
            <person name="Wong G.K.-S."/>
            <person name="Yang H."/>
        </authorList>
    </citation>
    <scope>NUCLEOTIDE SEQUENCE [LARGE SCALE GENOMIC DNA]</scope>
    <source>
        <strain>cv. Nipponbare</strain>
    </source>
</reference>
<reference key="6">
    <citation type="journal article" date="2003" name="Science">
        <title>Collection, mapping, and annotation of over 28,000 cDNA clones from japonica rice.</title>
        <authorList>
            <consortium name="The rice full-length cDNA consortium"/>
        </authorList>
    </citation>
    <scope>NUCLEOTIDE SEQUENCE [LARGE SCALE MRNA]</scope>
    <source>
        <strain>cv. Nipponbare</strain>
    </source>
</reference>
<reference key="7">
    <citation type="journal article" date="2008" name="Mol. Plant">
        <title>Classification, expression pattern, and E3 ligase activity assay of rice U-box-containing proteins.</title>
        <authorList>
            <person name="Zeng L.R."/>
            <person name="Park C.H."/>
            <person name="Venu R.C."/>
            <person name="Gough J."/>
            <person name="Wang G.L."/>
        </authorList>
    </citation>
    <scope>FUNCTION</scope>
    <scope>GENE FAMILY</scope>
    <scope>NOMENCLATURE</scope>
</reference>
<comment type="function">
    <text evidence="2 4">Probable ubiquitin-protein ligase which is mainly involved pre-mRNA splicing and DNA repair.</text>
</comment>
<comment type="catalytic activity">
    <reaction evidence="4">
        <text>S-ubiquitinyl-[E2 ubiquitin-conjugating enzyme]-L-cysteine + [acceptor protein]-L-lysine = [E2 ubiquitin-conjugating enzyme]-L-cysteine + N(6)-ubiquitinyl-[acceptor protein]-L-lysine.</text>
        <dbReference type="EC" id="2.3.2.27"/>
    </reaction>
</comment>
<comment type="pathway">
    <text evidence="4">Protein modification; protein ubiquitination.</text>
</comment>
<comment type="subunit">
    <text evidence="1">Homotetramer. Component of the multiprotein assembly MOS4-associated complex (MAC) at least composed of MOS4, CDC5, PRL1 and PRP19 which is related to the PRP19C/Prp19 complex/NTC/Nineteen complex identified in other organisms. Associated with the spliceosome.</text>
</comment>
<comment type="subcellular location">
    <subcellularLocation>
        <location evidence="1">Nucleus</location>
    </subcellularLocation>
</comment>
<comment type="similarity">
    <text evidence="5">Belongs to the WD repeat PRP19 family.</text>
</comment>
<evidence type="ECO:0000250" key="1">
    <source>
        <dbReference type="UniProtKB" id="Q94BR4"/>
    </source>
</evidence>
<evidence type="ECO:0000250" key="2">
    <source>
        <dbReference type="UniProtKB" id="Q9UMS4"/>
    </source>
</evidence>
<evidence type="ECO:0000255" key="3"/>
<evidence type="ECO:0000269" key="4">
    <source>
    </source>
</evidence>
<evidence type="ECO:0000305" key="5"/>
<protein>
    <recommendedName>
        <fullName evidence="5">Pre-mRNA-processing factor 19</fullName>
        <ecNumber evidence="4">2.3.2.27</ecNumber>
    </recommendedName>
    <alternativeName>
        <fullName>Plant U-box protein 72</fullName>
        <shortName>OsPUB72</shortName>
    </alternativeName>
    <alternativeName>
        <fullName evidence="5">RING-type E3 ubiquitin transferase PRP19</fullName>
    </alternativeName>
    <alternativeName>
        <fullName>U-box domain-containing protein 72</fullName>
    </alternativeName>
</protein>
<gene>
    <name type="primary">PRP19</name>
    <name type="synonym">PUB72</name>
    <name type="ordered locus">Os10g0466300</name>
    <name type="ordered locus">LOC_Os10g32880</name>
    <name type="ORF">OsJ_31829</name>
    <name type="ORF">OSJNBa0006L06.5</name>
</gene>
<dbReference type="EC" id="2.3.2.27" evidence="4"/>
<dbReference type="EMBL" id="AC022457">
    <property type="protein sequence ID" value="AAK27816.1"/>
    <property type="molecule type" value="Genomic_DNA"/>
</dbReference>
<dbReference type="EMBL" id="DP000086">
    <property type="protein sequence ID" value="AAP54192.1"/>
    <property type="molecule type" value="Genomic_DNA"/>
</dbReference>
<dbReference type="EMBL" id="DP000086">
    <property type="protein sequence ID" value="ABG66129.1"/>
    <property type="molecule type" value="Genomic_DNA"/>
</dbReference>
<dbReference type="EMBL" id="AP008216">
    <property type="protein sequence ID" value="BAF26718.1"/>
    <property type="molecule type" value="Genomic_DNA"/>
</dbReference>
<dbReference type="EMBL" id="AP014966">
    <property type="protein sequence ID" value="BAT11216.1"/>
    <property type="molecule type" value="Genomic_DNA"/>
</dbReference>
<dbReference type="EMBL" id="CM000147">
    <property type="protein sequence ID" value="EEE51104.1"/>
    <property type="molecule type" value="Genomic_DNA"/>
</dbReference>
<dbReference type="EMBL" id="AK064778">
    <property type="protein sequence ID" value="BAG89200.1"/>
    <property type="molecule type" value="mRNA"/>
</dbReference>
<dbReference type="RefSeq" id="XP_015614850.1">
    <property type="nucleotide sequence ID" value="XM_015759364.1"/>
</dbReference>
<dbReference type="SMR" id="Q9AV81"/>
<dbReference type="FunCoup" id="Q9AV81">
    <property type="interactions" value="3213"/>
</dbReference>
<dbReference type="STRING" id="39947.Q9AV81"/>
<dbReference type="PaxDb" id="39947-Q9AV81"/>
<dbReference type="EnsemblPlants" id="Os10t0466300-01">
    <property type="protein sequence ID" value="Os10t0466300-01"/>
    <property type="gene ID" value="Os10g0466300"/>
</dbReference>
<dbReference type="EnsemblPlants" id="Os10t0466300-02">
    <property type="protein sequence ID" value="Os10t0466300-02"/>
    <property type="gene ID" value="Os10g0466300"/>
</dbReference>
<dbReference type="Gramene" id="Os10t0466300-01">
    <property type="protein sequence ID" value="Os10t0466300-01"/>
    <property type="gene ID" value="Os10g0466300"/>
</dbReference>
<dbReference type="Gramene" id="Os10t0466300-02">
    <property type="protein sequence ID" value="Os10t0466300-02"/>
    <property type="gene ID" value="Os10g0466300"/>
</dbReference>
<dbReference type="KEGG" id="dosa:Os10g0466300"/>
<dbReference type="eggNOG" id="KOG0289">
    <property type="taxonomic scope" value="Eukaryota"/>
</dbReference>
<dbReference type="HOGENOM" id="CLU_023894_1_0_1"/>
<dbReference type="InParanoid" id="Q9AV81"/>
<dbReference type="OMA" id="SLDQHWA"/>
<dbReference type="OrthoDB" id="687049at2759"/>
<dbReference type="UniPathway" id="UPA00143"/>
<dbReference type="Proteomes" id="UP000000763">
    <property type="component" value="Chromosome 10"/>
</dbReference>
<dbReference type="Proteomes" id="UP000007752">
    <property type="component" value="Chromosome 10"/>
</dbReference>
<dbReference type="Proteomes" id="UP000059680">
    <property type="component" value="Chromosome 10"/>
</dbReference>
<dbReference type="GO" id="GO:0005737">
    <property type="term" value="C:cytoplasm"/>
    <property type="evidence" value="ECO:0000318"/>
    <property type="project" value="GO_Central"/>
</dbReference>
<dbReference type="GO" id="GO:0005634">
    <property type="term" value="C:nucleus"/>
    <property type="evidence" value="ECO:0000250"/>
    <property type="project" value="UniProtKB"/>
</dbReference>
<dbReference type="GO" id="GO:0000974">
    <property type="term" value="C:Prp19 complex"/>
    <property type="evidence" value="ECO:0000318"/>
    <property type="project" value="GO_Central"/>
</dbReference>
<dbReference type="GO" id="GO:0071006">
    <property type="term" value="C:U2-type catalytic step 1 spliceosome"/>
    <property type="evidence" value="ECO:0000318"/>
    <property type="project" value="GO_Central"/>
</dbReference>
<dbReference type="GO" id="GO:0061630">
    <property type="term" value="F:ubiquitin protein ligase activity"/>
    <property type="evidence" value="ECO:0000250"/>
    <property type="project" value="UniProtKB"/>
</dbReference>
<dbReference type="GO" id="GO:0004842">
    <property type="term" value="F:ubiquitin-protein transferase activity"/>
    <property type="evidence" value="ECO:0000314"/>
    <property type="project" value="UniProtKB"/>
</dbReference>
<dbReference type="GO" id="GO:0006281">
    <property type="term" value="P:DNA repair"/>
    <property type="evidence" value="ECO:0007669"/>
    <property type="project" value="UniProtKB-KW"/>
</dbReference>
<dbReference type="GO" id="GO:0045087">
    <property type="term" value="P:innate immune response"/>
    <property type="evidence" value="ECO:0007669"/>
    <property type="project" value="UniProtKB-KW"/>
</dbReference>
<dbReference type="GO" id="GO:0000398">
    <property type="term" value="P:mRNA splicing, via spliceosome"/>
    <property type="evidence" value="ECO:0000318"/>
    <property type="project" value="GO_Central"/>
</dbReference>
<dbReference type="GO" id="GO:0070534">
    <property type="term" value="P:protein K63-linked ubiquitination"/>
    <property type="evidence" value="ECO:0000250"/>
    <property type="project" value="UniProtKB"/>
</dbReference>
<dbReference type="GO" id="GO:0016567">
    <property type="term" value="P:protein ubiquitination"/>
    <property type="evidence" value="ECO:0000314"/>
    <property type="project" value="UniProtKB"/>
</dbReference>
<dbReference type="CDD" id="cd16656">
    <property type="entry name" value="RING-Ubox_PRP19"/>
    <property type="match status" value="1"/>
</dbReference>
<dbReference type="CDD" id="cd00200">
    <property type="entry name" value="WD40"/>
    <property type="match status" value="1"/>
</dbReference>
<dbReference type="FunFam" id="2.130.10.10:FF:000043">
    <property type="entry name" value="pre-mRNA-processing factor 19"/>
    <property type="match status" value="1"/>
</dbReference>
<dbReference type="FunFam" id="3.30.40.10:FF:000027">
    <property type="entry name" value="Pre-mRNA-processing factor 19, putative"/>
    <property type="match status" value="1"/>
</dbReference>
<dbReference type="Gene3D" id="2.130.10.10">
    <property type="entry name" value="YVTN repeat-like/Quinoprotein amine dehydrogenase"/>
    <property type="match status" value="1"/>
</dbReference>
<dbReference type="Gene3D" id="3.30.40.10">
    <property type="entry name" value="Zinc/RING finger domain, C3HC4 (zinc finger)"/>
    <property type="match status" value="1"/>
</dbReference>
<dbReference type="InterPro" id="IPR013915">
    <property type="entry name" value="Pre-mRNA_splic_Prp19_cc"/>
</dbReference>
<dbReference type="InterPro" id="IPR038959">
    <property type="entry name" value="Prp19"/>
</dbReference>
<dbReference type="InterPro" id="IPR055340">
    <property type="entry name" value="RING-Ubox_PRP19"/>
</dbReference>
<dbReference type="InterPro" id="IPR003613">
    <property type="entry name" value="Ubox_domain"/>
</dbReference>
<dbReference type="InterPro" id="IPR015943">
    <property type="entry name" value="WD40/YVTN_repeat-like_dom_sf"/>
</dbReference>
<dbReference type="InterPro" id="IPR036322">
    <property type="entry name" value="WD40_repeat_dom_sf"/>
</dbReference>
<dbReference type="InterPro" id="IPR001680">
    <property type="entry name" value="WD40_rpt"/>
</dbReference>
<dbReference type="InterPro" id="IPR013083">
    <property type="entry name" value="Znf_RING/FYVE/PHD"/>
</dbReference>
<dbReference type="PANTHER" id="PTHR43995">
    <property type="entry name" value="PRE-MRNA-PROCESSING FACTOR 19"/>
    <property type="match status" value="1"/>
</dbReference>
<dbReference type="PANTHER" id="PTHR43995:SF1">
    <property type="entry name" value="PRE-MRNA-PROCESSING FACTOR 19"/>
    <property type="match status" value="1"/>
</dbReference>
<dbReference type="Pfam" id="PF08606">
    <property type="entry name" value="Prp19"/>
    <property type="match status" value="1"/>
</dbReference>
<dbReference type="Pfam" id="PF24814">
    <property type="entry name" value="WD40_Prp19"/>
    <property type="match status" value="1"/>
</dbReference>
<dbReference type="SMART" id="SM00504">
    <property type="entry name" value="Ubox"/>
    <property type="match status" value="1"/>
</dbReference>
<dbReference type="SMART" id="SM00320">
    <property type="entry name" value="WD40"/>
    <property type="match status" value="7"/>
</dbReference>
<dbReference type="SUPFAM" id="SSF57850">
    <property type="entry name" value="RING/U-box"/>
    <property type="match status" value="1"/>
</dbReference>
<dbReference type="SUPFAM" id="SSF50978">
    <property type="entry name" value="WD40 repeat-like"/>
    <property type="match status" value="1"/>
</dbReference>
<dbReference type="PROSITE" id="PS51698">
    <property type="entry name" value="U_BOX"/>
    <property type="match status" value="1"/>
</dbReference>
<dbReference type="PROSITE" id="PS50082">
    <property type="entry name" value="WD_REPEATS_2"/>
    <property type="match status" value="4"/>
</dbReference>
<dbReference type="PROSITE" id="PS50294">
    <property type="entry name" value="WD_REPEATS_REGION"/>
    <property type="match status" value="1"/>
</dbReference>
<accession>Q9AV81</accession>
<accession>F4MGW6</accession>
<accession>Q7XDL9</accession>
<proteinExistence type="evidence at transcript level"/>
<organism>
    <name type="scientific">Oryza sativa subsp. japonica</name>
    <name type="common">Rice</name>
    <dbReference type="NCBI Taxonomy" id="39947"/>
    <lineage>
        <taxon>Eukaryota</taxon>
        <taxon>Viridiplantae</taxon>
        <taxon>Streptophyta</taxon>
        <taxon>Embryophyta</taxon>
        <taxon>Tracheophyta</taxon>
        <taxon>Spermatophyta</taxon>
        <taxon>Magnoliopsida</taxon>
        <taxon>Liliopsida</taxon>
        <taxon>Poales</taxon>
        <taxon>Poaceae</taxon>
        <taxon>BOP clade</taxon>
        <taxon>Oryzoideae</taxon>
        <taxon>Oryzeae</taxon>
        <taxon>Oryzinae</taxon>
        <taxon>Oryza</taxon>
        <taxon>Oryza sativa</taxon>
    </lineage>
</organism>